<gene>
    <name evidence="1" type="primary">rplT</name>
    <name type="ordered locus">SPT_1242</name>
</gene>
<accession>C1CRT9</accession>
<evidence type="ECO:0000255" key="1">
    <source>
        <dbReference type="HAMAP-Rule" id="MF_00382"/>
    </source>
</evidence>
<evidence type="ECO:0000305" key="2"/>
<comment type="function">
    <text evidence="1">Binds directly to 23S ribosomal RNA and is necessary for the in vitro assembly process of the 50S ribosomal subunit. It is not involved in the protein synthesizing functions of that subunit.</text>
</comment>
<comment type="similarity">
    <text evidence="1">Belongs to the bacterial ribosomal protein bL20 family.</text>
</comment>
<name>RL20_STRZT</name>
<organism>
    <name type="scientific">Streptococcus pneumoniae (strain Taiwan19F-14)</name>
    <dbReference type="NCBI Taxonomy" id="487213"/>
    <lineage>
        <taxon>Bacteria</taxon>
        <taxon>Bacillati</taxon>
        <taxon>Bacillota</taxon>
        <taxon>Bacilli</taxon>
        <taxon>Lactobacillales</taxon>
        <taxon>Streptococcaceae</taxon>
        <taxon>Streptococcus</taxon>
    </lineage>
</organism>
<sequence>MARVKGGVVSRKRRKRILKLAKGYYGAKHILFRTAKEQVMNSYYYAYRDRRQKKRDFRKLWITRINAAARMNGLSYSQLMHGLKLAEIEVNRKMLADLAVNDAVAFTALADAAKAKLGK</sequence>
<keyword id="KW-0687">Ribonucleoprotein</keyword>
<keyword id="KW-0689">Ribosomal protein</keyword>
<keyword id="KW-0694">RNA-binding</keyword>
<keyword id="KW-0699">rRNA-binding</keyword>
<proteinExistence type="inferred from homology"/>
<dbReference type="EMBL" id="CP000921">
    <property type="protein sequence ID" value="ACO22304.1"/>
    <property type="molecule type" value="Genomic_DNA"/>
</dbReference>
<dbReference type="RefSeq" id="WP_000124836.1">
    <property type="nucleotide sequence ID" value="NC_012469.1"/>
</dbReference>
<dbReference type="SMR" id="C1CRT9"/>
<dbReference type="GeneID" id="45653697"/>
<dbReference type="KEGG" id="snt:SPT_1242"/>
<dbReference type="HOGENOM" id="CLU_123265_0_1_9"/>
<dbReference type="GO" id="GO:1990904">
    <property type="term" value="C:ribonucleoprotein complex"/>
    <property type="evidence" value="ECO:0007669"/>
    <property type="project" value="UniProtKB-KW"/>
</dbReference>
<dbReference type="GO" id="GO:0005840">
    <property type="term" value="C:ribosome"/>
    <property type="evidence" value="ECO:0007669"/>
    <property type="project" value="UniProtKB-KW"/>
</dbReference>
<dbReference type="GO" id="GO:0019843">
    <property type="term" value="F:rRNA binding"/>
    <property type="evidence" value="ECO:0007669"/>
    <property type="project" value="UniProtKB-UniRule"/>
</dbReference>
<dbReference type="GO" id="GO:0003735">
    <property type="term" value="F:structural constituent of ribosome"/>
    <property type="evidence" value="ECO:0007669"/>
    <property type="project" value="InterPro"/>
</dbReference>
<dbReference type="GO" id="GO:0000027">
    <property type="term" value="P:ribosomal large subunit assembly"/>
    <property type="evidence" value="ECO:0007669"/>
    <property type="project" value="UniProtKB-UniRule"/>
</dbReference>
<dbReference type="GO" id="GO:0006412">
    <property type="term" value="P:translation"/>
    <property type="evidence" value="ECO:0007669"/>
    <property type="project" value="InterPro"/>
</dbReference>
<dbReference type="CDD" id="cd07026">
    <property type="entry name" value="Ribosomal_L20"/>
    <property type="match status" value="1"/>
</dbReference>
<dbReference type="FunFam" id="1.10.1900.20:FF:000001">
    <property type="entry name" value="50S ribosomal protein L20"/>
    <property type="match status" value="1"/>
</dbReference>
<dbReference type="Gene3D" id="6.10.160.10">
    <property type="match status" value="1"/>
</dbReference>
<dbReference type="Gene3D" id="1.10.1900.20">
    <property type="entry name" value="Ribosomal protein L20"/>
    <property type="match status" value="1"/>
</dbReference>
<dbReference type="HAMAP" id="MF_00382">
    <property type="entry name" value="Ribosomal_bL20"/>
    <property type="match status" value="1"/>
</dbReference>
<dbReference type="InterPro" id="IPR005813">
    <property type="entry name" value="Ribosomal_bL20"/>
</dbReference>
<dbReference type="InterPro" id="IPR049946">
    <property type="entry name" value="RIBOSOMAL_L20_CS"/>
</dbReference>
<dbReference type="InterPro" id="IPR035566">
    <property type="entry name" value="Ribosomal_protein_bL20_C"/>
</dbReference>
<dbReference type="NCBIfam" id="TIGR01032">
    <property type="entry name" value="rplT_bact"/>
    <property type="match status" value="1"/>
</dbReference>
<dbReference type="PANTHER" id="PTHR10986">
    <property type="entry name" value="39S RIBOSOMAL PROTEIN L20"/>
    <property type="match status" value="1"/>
</dbReference>
<dbReference type="Pfam" id="PF00453">
    <property type="entry name" value="Ribosomal_L20"/>
    <property type="match status" value="1"/>
</dbReference>
<dbReference type="PRINTS" id="PR00062">
    <property type="entry name" value="RIBOSOMALL20"/>
</dbReference>
<dbReference type="SUPFAM" id="SSF74731">
    <property type="entry name" value="Ribosomal protein L20"/>
    <property type="match status" value="1"/>
</dbReference>
<dbReference type="PROSITE" id="PS00937">
    <property type="entry name" value="RIBOSOMAL_L20"/>
    <property type="match status" value="1"/>
</dbReference>
<feature type="chain" id="PRO_1000134229" description="Large ribosomal subunit protein bL20">
    <location>
        <begin position="1"/>
        <end position="119"/>
    </location>
</feature>
<reference key="1">
    <citation type="journal article" date="2010" name="Genome Biol.">
        <title>Structure and dynamics of the pan-genome of Streptococcus pneumoniae and closely related species.</title>
        <authorList>
            <person name="Donati C."/>
            <person name="Hiller N.L."/>
            <person name="Tettelin H."/>
            <person name="Muzzi A."/>
            <person name="Croucher N.J."/>
            <person name="Angiuoli S.V."/>
            <person name="Oggioni M."/>
            <person name="Dunning Hotopp J.C."/>
            <person name="Hu F.Z."/>
            <person name="Riley D.R."/>
            <person name="Covacci A."/>
            <person name="Mitchell T.J."/>
            <person name="Bentley S.D."/>
            <person name="Kilian M."/>
            <person name="Ehrlich G.D."/>
            <person name="Rappuoli R."/>
            <person name="Moxon E.R."/>
            <person name="Masignani V."/>
        </authorList>
    </citation>
    <scope>NUCLEOTIDE SEQUENCE [LARGE SCALE GENOMIC DNA]</scope>
    <source>
        <strain>Taiwan19F-14</strain>
    </source>
</reference>
<protein>
    <recommendedName>
        <fullName evidence="1">Large ribosomal subunit protein bL20</fullName>
    </recommendedName>
    <alternativeName>
        <fullName evidence="2">50S ribosomal protein L20</fullName>
    </alternativeName>
</protein>